<sequence length="317" mass="35781">MDKQTYWEIIIHPSDFLDQFTDFIIQKTSCAIEFFDILPTPSHFAIIYDDASWQSVLGFDILKAKKSKQPTQIVSRIASNEINIQDFLESLQHFALMLAQNTQDSVGFCYHIEEKFNYDWIKAYQDSIEPVQCGRFYIRPSWEQEVKESYDEIIINPAFAFGSGHHASTAMCLEFLSEMNIQGKTLLDVGCGSGILSIASCKLGAQVYACDTDENAIKECNKNILLNGVMLNALWQGSIADSPMGAPQKYDVIVANIVAFIVKVLHNDFRTKLAKNGVLILSGILDEYKFDIIKAFNDFDMLDTCCKDGWVALKLTL</sequence>
<protein>
    <recommendedName>
        <fullName evidence="1">Ribosomal protein L11 methyltransferase</fullName>
        <shortName evidence="1">L11 Mtase</shortName>
        <ecNumber evidence="1">2.1.1.-</ecNumber>
    </recommendedName>
</protein>
<name>PRMA_HELHP</name>
<proteinExistence type="inferred from homology"/>
<gene>
    <name evidence="1" type="primary">prmA</name>
    <name type="ordered locus">HH_0824</name>
</gene>
<reference key="1">
    <citation type="journal article" date="2003" name="Proc. Natl. Acad. Sci. U.S.A.">
        <title>The complete genome sequence of the carcinogenic bacterium Helicobacter hepaticus.</title>
        <authorList>
            <person name="Suerbaum S."/>
            <person name="Josenhans C."/>
            <person name="Sterzenbach T."/>
            <person name="Drescher B."/>
            <person name="Brandt P."/>
            <person name="Bell M."/>
            <person name="Droege M."/>
            <person name="Fartmann B."/>
            <person name="Fischer H.-P."/>
            <person name="Ge Z."/>
            <person name="Hoerster A."/>
            <person name="Holland R."/>
            <person name="Klein K."/>
            <person name="Koenig J."/>
            <person name="Macko L."/>
            <person name="Mendz G.L."/>
            <person name="Nyakatura G."/>
            <person name="Schauer D.B."/>
            <person name="Shen Z."/>
            <person name="Weber J."/>
            <person name="Frosch M."/>
            <person name="Fox J.G."/>
        </authorList>
    </citation>
    <scope>NUCLEOTIDE SEQUENCE [LARGE SCALE GENOMIC DNA]</scope>
    <source>
        <strain>ATCC 51449 / 3B1</strain>
    </source>
</reference>
<accession>Q7VHY7</accession>
<keyword id="KW-0963">Cytoplasm</keyword>
<keyword id="KW-0489">Methyltransferase</keyword>
<keyword id="KW-1185">Reference proteome</keyword>
<keyword id="KW-0949">S-adenosyl-L-methionine</keyword>
<keyword id="KW-0808">Transferase</keyword>
<organism>
    <name type="scientific">Helicobacter hepaticus (strain ATCC 51449 / 3B1)</name>
    <dbReference type="NCBI Taxonomy" id="235279"/>
    <lineage>
        <taxon>Bacteria</taxon>
        <taxon>Pseudomonadati</taxon>
        <taxon>Campylobacterota</taxon>
        <taxon>Epsilonproteobacteria</taxon>
        <taxon>Campylobacterales</taxon>
        <taxon>Helicobacteraceae</taxon>
        <taxon>Helicobacter</taxon>
    </lineage>
</organism>
<comment type="function">
    <text evidence="1">Methylates ribosomal protein L11.</text>
</comment>
<comment type="catalytic activity">
    <reaction evidence="1">
        <text>L-lysyl-[protein] + 3 S-adenosyl-L-methionine = N(6),N(6),N(6)-trimethyl-L-lysyl-[protein] + 3 S-adenosyl-L-homocysteine + 3 H(+)</text>
        <dbReference type="Rhea" id="RHEA:54192"/>
        <dbReference type="Rhea" id="RHEA-COMP:9752"/>
        <dbReference type="Rhea" id="RHEA-COMP:13826"/>
        <dbReference type="ChEBI" id="CHEBI:15378"/>
        <dbReference type="ChEBI" id="CHEBI:29969"/>
        <dbReference type="ChEBI" id="CHEBI:57856"/>
        <dbReference type="ChEBI" id="CHEBI:59789"/>
        <dbReference type="ChEBI" id="CHEBI:61961"/>
    </reaction>
</comment>
<comment type="subcellular location">
    <subcellularLocation>
        <location evidence="1">Cytoplasm</location>
    </subcellularLocation>
</comment>
<comment type="similarity">
    <text evidence="1">Belongs to the methyltransferase superfamily. PrmA family.</text>
</comment>
<evidence type="ECO:0000255" key="1">
    <source>
        <dbReference type="HAMAP-Rule" id="MF_00735"/>
    </source>
</evidence>
<feature type="chain" id="PRO_0000192267" description="Ribosomal protein L11 methyltransferase">
    <location>
        <begin position="1"/>
        <end position="317"/>
    </location>
</feature>
<feature type="binding site" evidence="1">
    <location>
        <position position="169"/>
    </location>
    <ligand>
        <name>S-adenosyl-L-methionine</name>
        <dbReference type="ChEBI" id="CHEBI:59789"/>
    </ligand>
</feature>
<feature type="binding site" evidence="1">
    <location>
        <position position="190"/>
    </location>
    <ligand>
        <name>S-adenosyl-L-methionine</name>
        <dbReference type="ChEBI" id="CHEBI:59789"/>
    </ligand>
</feature>
<feature type="binding site" evidence="1">
    <location>
        <position position="211"/>
    </location>
    <ligand>
        <name>S-adenosyl-L-methionine</name>
        <dbReference type="ChEBI" id="CHEBI:59789"/>
    </ligand>
</feature>
<feature type="binding site" evidence="1">
    <location>
        <position position="256"/>
    </location>
    <ligand>
        <name>S-adenosyl-L-methionine</name>
        <dbReference type="ChEBI" id="CHEBI:59789"/>
    </ligand>
</feature>
<dbReference type="EC" id="2.1.1.-" evidence="1"/>
<dbReference type="EMBL" id="AE017125">
    <property type="protein sequence ID" value="AAP77421.1"/>
    <property type="molecule type" value="Genomic_DNA"/>
</dbReference>
<dbReference type="RefSeq" id="WP_011115664.1">
    <property type="nucleotide sequence ID" value="NC_004917.1"/>
</dbReference>
<dbReference type="STRING" id="235279.HH_0824"/>
<dbReference type="KEGG" id="hhe:HH_0824"/>
<dbReference type="eggNOG" id="COG2264">
    <property type="taxonomic scope" value="Bacteria"/>
</dbReference>
<dbReference type="HOGENOM" id="CLU_049382_1_0_7"/>
<dbReference type="OrthoDB" id="9785995at2"/>
<dbReference type="Proteomes" id="UP000002495">
    <property type="component" value="Chromosome"/>
</dbReference>
<dbReference type="GO" id="GO:0005737">
    <property type="term" value="C:cytoplasm"/>
    <property type="evidence" value="ECO:0007669"/>
    <property type="project" value="UniProtKB-SubCell"/>
</dbReference>
<dbReference type="GO" id="GO:0016279">
    <property type="term" value="F:protein-lysine N-methyltransferase activity"/>
    <property type="evidence" value="ECO:0007669"/>
    <property type="project" value="RHEA"/>
</dbReference>
<dbReference type="GO" id="GO:0032259">
    <property type="term" value="P:methylation"/>
    <property type="evidence" value="ECO:0007669"/>
    <property type="project" value="UniProtKB-KW"/>
</dbReference>
<dbReference type="CDD" id="cd02440">
    <property type="entry name" value="AdoMet_MTases"/>
    <property type="match status" value="1"/>
</dbReference>
<dbReference type="Gene3D" id="3.40.50.150">
    <property type="entry name" value="Vaccinia Virus protein VP39"/>
    <property type="match status" value="1"/>
</dbReference>
<dbReference type="HAMAP" id="MF_00735">
    <property type="entry name" value="Methyltr_PrmA"/>
    <property type="match status" value="1"/>
</dbReference>
<dbReference type="InterPro" id="IPR050078">
    <property type="entry name" value="Ribosomal_L11_MeTrfase_PrmA"/>
</dbReference>
<dbReference type="InterPro" id="IPR004498">
    <property type="entry name" value="Ribosomal_PrmA_MeTrfase"/>
</dbReference>
<dbReference type="InterPro" id="IPR029063">
    <property type="entry name" value="SAM-dependent_MTases_sf"/>
</dbReference>
<dbReference type="NCBIfam" id="NF001786">
    <property type="entry name" value="PRK00517.2-4"/>
    <property type="match status" value="1"/>
</dbReference>
<dbReference type="NCBIfam" id="TIGR00406">
    <property type="entry name" value="prmA"/>
    <property type="match status" value="1"/>
</dbReference>
<dbReference type="PANTHER" id="PTHR43648">
    <property type="entry name" value="ELECTRON TRANSFER FLAVOPROTEIN BETA SUBUNIT LYSINE METHYLTRANSFERASE"/>
    <property type="match status" value="1"/>
</dbReference>
<dbReference type="PANTHER" id="PTHR43648:SF1">
    <property type="entry name" value="ELECTRON TRANSFER FLAVOPROTEIN BETA SUBUNIT LYSINE METHYLTRANSFERASE"/>
    <property type="match status" value="1"/>
</dbReference>
<dbReference type="Pfam" id="PF06325">
    <property type="entry name" value="PrmA"/>
    <property type="match status" value="1"/>
</dbReference>
<dbReference type="SUPFAM" id="SSF53335">
    <property type="entry name" value="S-adenosyl-L-methionine-dependent methyltransferases"/>
    <property type="match status" value="1"/>
</dbReference>